<keyword id="KW-1003">Cell membrane</keyword>
<keyword id="KW-0472">Membrane</keyword>
<keyword id="KW-0812">Transmembrane</keyword>
<keyword id="KW-1133">Transmembrane helix</keyword>
<accession>P67149</accession>
<accession>Q99RT4</accession>
<gene>
    <name type="ordered locus">SA2130</name>
</gene>
<sequence length="108" mass="11758">MLYPIFIFILAGLCEIGGGYLIWLWLREGQSSLVGLIGGAILMLYGVIATFQSFPSFGRVYAAYGGVFIIMSLIFAMVVDKQMPDKYDVIGAIICIVGVLVMLLPSRA</sequence>
<organism>
    <name type="scientific">Staphylococcus aureus (strain N315)</name>
    <dbReference type="NCBI Taxonomy" id="158879"/>
    <lineage>
        <taxon>Bacteria</taxon>
        <taxon>Bacillati</taxon>
        <taxon>Bacillota</taxon>
        <taxon>Bacilli</taxon>
        <taxon>Bacillales</taxon>
        <taxon>Staphylococcaceae</taxon>
        <taxon>Staphylococcus</taxon>
    </lineage>
</organism>
<protein>
    <recommendedName>
        <fullName evidence="1">UPF0060 membrane protein SA2130</fullName>
    </recommendedName>
</protein>
<proteinExistence type="inferred from homology"/>
<dbReference type="EMBL" id="BA000018">
    <property type="protein sequence ID" value="BAB43431.1"/>
    <property type="molecule type" value="Genomic_DNA"/>
</dbReference>
<dbReference type="PIR" id="F90033">
    <property type="entry name" value="F90033"/>
</dbReference>
<dbReference type="RefSeq" id="WP_000966695.1">
    <property type="nucleotide sequence ID" value="NC_002745.2"/>
</dbReference>
<dbReference type="SMR" id="P67149"/>
<dbReference type="EnsemblBacteria" id="BAB43431">
    <property type="protein sequence ID" value="BAB43431"/>
    <property type="gene ID" value="BAB43431"/>
</dbReference>
<dbReference type="KEGG" id="sau:SA2130"/>
<dbReference type="HOGENOM" id="CLU_117653_0_1_9"/>
<dbReference type="GO" id="GO:0005886">
    <property type="term" value="C:plasma membrane"/>
    <property type="evidence" value="ECO:0007669"/>
    <property type="project" value="UniProtKB-SubCell"/>
</dbReference>
<dbReference type="HAMAP" id="MF_00010">
    <property type="entry name" value="UPF0060"/>
    <property type="match status" value="1"/>
</dbReference>
<dbReference type="InterPro" id="IPR003844">
    <property type="entry name" value="UPF0060"/>
</dbReference>
<dbReference type="NCBIfam" id="NF002586">
    <property type="entry name" value="PRK02237.1"/>
    <property type="match status" value="1"/>
</dbReference>
<dbReference type="PANTHER" id="PTHR36116">
    <property type="entry name" value="UPF0060 MEMBRANE PROTEIN YNFA"/>
    <property type="match status" value="1"/>
</dbReference>
<dbReference type="PANTHER" id="PTHR36116:SF1">
    <property type="entry name" value="UPF0060 MEMBRANE PROTEIN YNFA"/>
    <property type="match status" value="1"/>
</dbReference>
<dbReference type="Pfam" id="PF02694">
    <property type="entry name" value="UPF0060"/>
    <property type="match status" value="1"/>
</dbReference>
<dbReference type="SUPFAM" id="SSF103481">
    <property type="entry name" value="Multidrug resistance efflux transporter EmrE"/>
    <property type="match status" value="1"/>
</dbReference>
<name>Y2130_STAAN</name>
<comment type="subcellular location">
    <subcellularLocation>
        <location evidence="1">Cell membrane</location>
        <topology evidence="1">Multi-pass membrane protein</topology>
    </subcellularLocation>
</comment>
<comment type="similarity">
    <text evidence="1">Belongs to the UPF0060 family.</text>
</comment>
<reference key="1">
    <citation type="journal article" date="2001" name="Lancet">
        <title>Whole genome sequencing of meticillin-resistant Staphylococcus aureus.</title>
        <authorList>
            <person name="Kuroda M."/>
            <person name="Ohta T."/>
            <person name="Uchiyama I."/>
            <person name="Baba T."/>
            <person name="Yuzawa H."/>
            <person name="Kobayashi I."/>
            <person name="Cui L."/>
            <person name="Oguchi A."/>
            <person name="Aoki K."/>
            <person name="Nagai Y."/>
            <person name="Lian J.-Q."/>
            <person name="Ito T."/>
            <person name="Kanamori M."/>
            <person name="Matsumaru H."/>
            <person name="Maruyama A."/>
            <person name="Murakami H."/>
            <person name="Hosoyama A."/>
            <person name="Mizutani-Ui Y."/>
            <person name="Takahashi N.K."/>
            <person name="Sawano T."/>
            <person name="Inoue R."/>
            <person name="Kaito C."/>
            <person name="Sekimizu K."/>
            <person name="Hirakawa H."/>
            <person name="Kuhara S."/>
            <person name="Goto S."/>
            <person name="Yabuzaki J."/>
            <person name="Kanehisa M."/>
            <person name="Yamashita A."/>
            <person name="Oshima K."/>
            <person name="Furuya K."/>
            <person name="Yoshino C."/>
            <person name="Shiba T."/>
            <person name="Hattori M."/>
            <person name="Ogasawara N."/>
            <person name="Hayashi H."/>
            <person name="Hiramatsu K."/>
        </authorList>
    </citation>
    <scope>NUCLEOTIDE SEQUENCE [LARGE SCALE GENOMIC DNA]</scope>
    <source>
        <strain>N315</strain>
    </source>
</reference>
<evidence type="ECO:0000255" key="1">
    <source>
        <dbReference type="HAMAP-Rule" id="MF_00010"/>
    </source>
</evidence>
<feature type="chain" id="PRO_0000162348" description="UPF0060 membrane protein SA2130">
    <location>
        <begin position="1"/>
        <end position="108"/>
    </location>
</feature>
<feature type="transmembrane region" description="Helical" evidence="1">
    <location>
        <begin position="5"/>
        <end position="25"/>
    </location>
</feature>
<feature type="transmembrane region" description="Helical" evidence="1">
    <location>
        <begin position="31"/>
        <end position="51"/>
    </location>
</feature>
<feature type="transmembrane region" description="Helical" evidence="1">
    <location>
        <begin position="60"/>
        <end position="80"/>
    </location>
</feature>
<feature type="transmembrane region" description="Helical" evidence="1">
    <location>
        <begin position="86"/>
        <end position="106"/>
    </location>
</feature>